<accession>Q6G7E1</accession>
<evidence type="ECO:0000305" key="1"/>
<feature type="chain" id="PRO_0000294500" description="UPF0457 protein SAS2074">
    <location>
        <begin position="1"/>
        <end position="86"/>
    </location>
</feature>
<gene>
    <name type="ordered locus">SAS2074</name>
</gene>
<proteinExistence type="inferred from homology"/>
<reference key="1">
    <citation type="journal article" date="2004" name="Proc. Natl. Acad. Sci. U.S.A.">
        <title>Complete genomes of two clinical Staphylococcus aureus strains: evidence for the rapid evolution of virulence and drug resistance.</title>
        <authorList>
            <person name="Holden M.T.G."/>
            <person name="Feil E.J."/>
            <person name="Lindsay J.A."/>
            <person name="Peacock S.J."/>
            <person name="Day N.P.J."/>
            <person name="Enright M.C."/>
            <person name="Foster T.J."/>
            <person name="Moore C.E."/>
            <person name="Hurst L."/>
            <person name="Atkin R."/>
            <person name="Barron A."/>
            <person name="Bason N."/>
            <person name="Bentley S.D."/>
            <person name="Chillingworth C."/>
            <person name="Chillingworth T."/>
            <person name="Churcher C."/>
            <person name="Clark L."/>
            <person name="Corton C."/>
            <person name="Cronin A."/>
            <person name="Doggett J."/>
            <person name="Dowd L."/>
            <person name="Feltwell T."/>
            <person name="Hance Z."/>
            <person name="Harris B."/>
            <person name="Hauser H."/>
            <person name="Holroyd S."/>
            <person name="Jagels K."/>
            <person name="James K.D."/>
            <person name="Lennard N."/>
            <person name="Line A."/>
            <person name="Mayes R."/>
            <person name="Moule S."/>
            <person name="Mungall K."/>
            <person name="Ormond D."/>
            <person name="Quail M.A."/>
            <person name="Rabbinowitsch E."/>
            <person name="Rutherford K.M."/>
            <person name="Sanders M."/>
            <person name="Sharp S."/>
            <person name="Simmonds M."/>
            <person name="Stevens K."/>
            <person name="Whitehead S."/>
            <person name="Barrell B.G."/>
            <person name="Spratt B.G."/>
            <person name="Parkhill J."/>
        </authorList>
    </citation>
    <scope>NUCLEOTIDE SEQUENCE [LARGE SCALE GENOMIC DNA]</scope>
    <source>
        <strain>MSSA476</strain>
    </source>
</reference>
<name>Y2074_STAAS</name>
<sequence length="86" mass="10006">MAMTVKKDNNEVRIQWRVADIKIPTSEIKNITQDQDIHAVPKLDSKDVSRIGSTFGKTNRVIIDTEDHEYIIYTQNDQKVYNELTK</sequence>
<dbReference type="EMBL" id="BX571857">
    <property type="protein sequence ID" value="CAG43882.1"/>
    <property type="molecule type" value="Genomic_DNA"/>
</dbReference>
<dbReference type="RefSeq" id="WP_001251935.1">
    <property type="nucleotide sequence ID" value="NC_002953.3"/>
</dbReference>
<dbReference type="SMR" id="Q6G7E1"/>
<dbReference type="KEGG" id="sas:SAS2074"/>
<dbReference type="HOGENOM" id="CLU_174851_0_0_9"/>
<dbReference type="InterPro" id="IPR055365">
    <property type="entry name" value="PH_SunI-like"/>
</dbReference>
<dbReference type="Pfam" id="PF23491">
    <property type="entry name" value="bPH_8"/>
    <property type="match status" value="1"/>
</dbReference>
<organism>
    <name type="scientific">Staphylococcus aureus (strain MSSA476)</name>
    <dbReference type="NCBI Taxonomy" id="282459"/>
    <lineage>
        <taxon>Bacteria</taxon>
        <taxon>Bacillati</taxon>
        <taxon>Bacillota</taxon>
        <taxon>Bacilli</taxon>
        <taxon>Bacillales</taxon>
        <taxon>Staphylococcaceae</taxon>
        <taxon>Staphylococcus</taxon>
    </lineage>
</organism>
<protein>
    <recommendedName>
        <fullName>UPF0457 protein SAS2074</fullName>
    </recommendedName>
</protein>
<comment type="similarity">
    <text evidence="1">Belongs to the UPF0457 family.</text>
</comment>